<dbReference type="EMBL" id="X73124">
    <property type="protein sequence ID" value="CAA51640.1"/>
    <property type="molecule type" value="Genomic_DNA"/>
</dbReference>
<dbReference type="EMBL" id="AL009126">
    <property type="protein sequence ID" value="CAB15797.1"/>
    <property type="molecule type" value="Genomic_DNA"/>
</dbReference>
<dbReference type="PIR" id="S39739">
    <property type="entry name" value="S39739"/>
</dbReference>
<dbReference type="RefSeq" id="NP_391650.1">
    <property type="nucleotide sequence ID" value="NC_000964.3"/>
</dbReference>
<dbReference type="RefSeq" id="WP_003244502.1">
    <property type="nucleotide sequence ID" value="NZ_OZ025638.1"/>
</dbReference>
<dbReference type="SMR" id="P39642"/>
<dbReference type="FunCoup" id="P39642">
    <property type="interactions" value="8"/>
</dbReference>
<dbReference type="STRING" id="224308.BSU37700"/>
<dbReference type="TCDB" id="2.A.1.21.5">
    <property type="family name" value="the major facilitator superfamily (mfs)"/>
</dbReference>
<dbReference type="PaxDb" id="224308-BSU37700"/>
<dbReference type="EnsemblBacteria" id="CAB15797">
    <property type="protein sequence ID" value="CAB15797"/>
    <property type="gene ID" value="BSU_37700"/>
</dbReference>
<dbReference type="GeneID" id="937161"/>
<dbReference type="KEGG" id="bsu:BSU37700"/>
<dbReference type="PATRIC" id="fig|224308.179.peg.4082"/>
<dbReference type="eggNOG" id="COG2814">
    <property type="taxonomic scope" value="Bacteria"/>
</dbReference>
<dbReference type="InParanoid" id="P39642"/>
<dbReference type="OrthoDB" id="9775268at2"/>
<dbReference type="BioCyc" id="BSUB:BSU37700-MONOMER"/>
<dbReference type="Proteomes" id="UP000001570">
    <property type="component" value="Chromosome"/>
</dbReference>
<dbReference type="GO" id="GO:0005886">
    <property type="term" value="C:plasma membrane"/>
    <property type="evidence" value="ECO:0007669"/>
    <property type="project" value="UniProtKB-SubCell"/>
</dbReference>
<dbReference type="GO" id="GO:0022857">
    <property type="term" value="F:transmembrane transporter activity"/>
    <property type="evidence" value="ECO:0007669"/>
    <property type="project" value="InterPro"/>
</dbReference>
<dbReference type="CDD" id="cd06173">
    <property type="entry name" value="MFS_MefA_like"/>
    <property type="match status" value="1"/>
</dbReference>
<dbReference type="Gene3D" id="1.20.1250.20">
    <property type="entry name" value="MFS general substrate transporter like domains"/>
    <property type="match status" value="1"/>
</dbReference>
<dbReference type="InterPro" id="IPR022324">
    <property type="entry name" value="Bacilysin_exporter_BacE_put"/>
</dbReference>
<dbReference type="InterPro" id="IPR011701">
    <property type="entry name" value="MFS"/>
</dbReference>
<dbReference type="InterPro" id="IPR036259">
    <property type="entry name" value="MFS_trans_sf"/>
</dbReference>
<dbReference type="PANTHER" id="PTHR43266:SF10">
    <property type="entry name" value="BACILYSIN EXPORTER BACE-RELATED"/>
    <property type="match status" value="1"/>
</dbReference>
<dbReference type="PANTHER" id="PTHR43266">
    <property type="entry name" value="MACROLIDE-EFFLUX PROTEIN"/>
    <property type="match status" value="1"/>
</dbReference>
<dbReference type="Pfam" id="PF07690">
    <property type="entry name" value="MFS_1"/>
    <property type="match status" value="1"/>
</dbReference>
<dbReference type="PRINTS" id="PR01988">
    <property type="entry name" value="EXPORTERBACE"/>
</dbReference>
<dbReference type="SUPFAM" id="SSF103473">
    <property type="entry name" value="MFS general substrate transporter"/>
    <property type="match status" value="1"/>
</dbReference>
<feature type="chain" id="PRO_0000084834" description="Putative bacilysin exporter BacE">
    <location>
        <begin position="1"/>
        <end position="394"/>
    </location>
</feature>
<feature type="transmembrane region" description="Helical" evidence="1">
    <location>
        <begin position="11"/>
        <end position="31"/>
    </location>
</feature>
<feature type="transmembrane region" description="Helical" evidence="1">
    <location>
        <begin position="43"/>
        <end position="63"/>
    </location>
</feature>
<feature type="transmembrane region" description="Helical" evidence="1">
    <location>
        <begin position="69"/>
        <end position="89"/>
    </location>
</feature>
<feature type="transmembrane region" description="Helical" evidence="1">
    <location>
        <begin position="92"/>
        <end position="112"/>
    </location>
</feature>
<feature type="transmembrane region" description="Helical" evidence="1">
    <location>
        <begin position="142"/>
        <end position="162"/>
    </location>
</feature>
<feature type="transmembrane region" description="Helical" evidence="1">
    <location>
        <begin position="166"/>
        <end position="186"/>
    </location>
</feature>
<feature type="transmembrane region" description="Helical" evidence="1">
    <location>
        <begin position="215"/>
        <end position="235"/>
    </location>
</feature>
<feature type="transmembrane region" description="Helical" evidence="1">
    <location>
        <begin position="244"/>
        <end position="264"/>
    </location>
</feature>
<feature type="transmembrane region" description="Helical" evidence="1">
    <location>
        <begin position="288"/>
        <end position="308"/>
    </location>
</feature>
<feature type="transmembrane region" description="Helical" evidence="1">
    <location>
        <begin position="332"/>
        <end position="352"/>
    </location>
</feature>
<feature type="transmembrane region" description="Helical" evidence="1">
    <location>
        <begin position="353"/>
        <end position="373"/>
    </location>
</feature>
<proteinExistence type="evidence at protein level"/>
<organism>
    <name type="scientific">Bacillus subtilis (strain 168)</name>
    <dbReference type="NCBI Taxonomy" id="224308"/>
    <lineage>
        <taxon>Bacteria</taxon>
        <taxon>Bacillati</taxon>
        <taxon>Bacillota</taxon>
        <taxon>Bacilli</taxon>
        <taxon>Bacillales</taxon>
        <taxon>Bacillaceae</taxon>
        <taxon>Bacillus</taxon>
    </lineage>
</organism>
<reference key="1">
    <citation type="journal article" date="1993" name="Mol. Microbiol.">
        <title>Bacillus subtilis genome project: cloning and sequencing of the 97 kb region from 325 degrees to 333 degrees.</title>
        <authorList>
            <person name="Glaser P."/>
            <person name="Kunst F."/>
            <person name="Arnaud M."/>
            <person name="Coudart M.P."/>
            <person name="Gonzales W."/>
            <person name="Hullo M.-F."/>
            <person name="Ionescu M."/>
            <person name="Lubochinsky B."/>
            <person name="Marcelino L."/>
            <person name="Moszer I."/>
            <person name="Presecan E."/>
            <person name="Santana M."/>
            <person name="Schneider E."/>
            <person name="Schweizer J."/>
            <person name="Vertes A."/>
            <person name="Rapoport G."/>
            <person name="Danchin A."/>
        </authorList>
    </citation>
    <scope>NUCLEOTIDE SEQUENCE [GENOMIC DNA]</scope>
    <source>
        <strain>168</strain>
    </source>
</reference>
<reference key="2">
    <citation type="journal article" date="1997" name="Nature">
        <title>The complete genome sequence of the Gram-positive bacterium Bacillus subtilis.</title>
        <authorList>
            <person name="Kunst F."/>
            <person name="Ogasawara N."/>
            <person name="Moszer I."/>
            <person name="Albertini A.M."/>
            <person name="Alloni G."/>
            <person name="Azevedo V."/>
            <person name="Bertero M.G."/>
            <person name="Bessieres P."/>
            <person name="Bolotin A."/>
            <person name="Borchert S."/>
            <person name="Borriss R."/>
            <person name="Boursier L."/>
            <person name="Brans A."/>
            <person name="Braun M."/>
            <person name="Brignell S.C."/>
            <person name="Bron S."/>
            <person name="Brouillet S."/>
            <person name="Bruschi C.V."/>
            <person name="Caldwell B."/>
            <person name="Capuano V."/>
            <person name="Carter N.M."/>
            <person name="Choi S.-K."/>
            <person name="Codani J.-J."/>
            <person name="Connerton I.F."/>
            <person name="Cummings N.J."/>
            <person name="Daniel R.A."/>
            <person name="Denizot F."/>
            <person name="Devine K.M."/>
            <person name="Duesterhoeft A."/>
            <person name="Ehrlich S.D."/>
            <person name="Emmerson P.T."/>
            <person name="Entian K.-D."/>
            <person name="Errington J."/>
            <person name="Fabret C."/>
            <person name="Ferrari E."/>
            <person name="Foulger D."/>
            <person name="Fritz C."/>
            <person name="Fujita M."/>
            <person name="Fujita Y."/>
            <person name="Fuma S."/>
            <person name="Galizzi A."/>
            <person name="Galleron N."/>
            <person name="Ghim S.-Y."/>
            <person name="Glaser P."/>
            <person name="Goffeau A."/>
            <person name="Golightly E.J."/>
            <person name="Grandi G."/>
            <person name="Guiseppi G."/>
            <person name="Guy B.J."/>
            <person name="Haga K."/>
            <person name="Haiech J."/>
            <person name="Harwood C.R."/>
            <person name="Henaut A."/>
            <person name="Hilbert H."/>
            <person name="Holsappel S."/>
            <person name="Hosono S."/>
            <person name="Hullo M.-F."/>
            <person name="Itaya M."/>
            <person name="Jones L.-M."/>
            <person name="Joris B."/>
            <person name="Karamata D."/>
            <person name="Kasahara Y."/>
            <person name="Klaerr-Blanchard M."/>
            <person name="Klein C."/>
            <person name="Kobayashi Y."/>
            <person name="Koetter P."/>
            <person name="Koningstein G."/>
            <person name="Krogh S."/>
            <person name="Kumano M."/>
            <person name="Kurita K."/>
            <person name="Lapidus A."/>
            <person name="Lardinois S."/>
            <person name="Lauber J."/>
            <person name="Lazarevic V."/>
            <person name="Lee S.-M."/>
            <person name="Levine A."/>
            <person name="Liu H."/>
            <person name="Masuda S."/>
            <person name="Mauel C."/>
            <person name="Medigue C."/>
            <person name="Medina N."/>
            <person name="Mellado R.P."/>
            <person name="Mizuno M."/>
            <person name="Moestl D."/>
            <person name="Nakai S."/>
            <person name="Noback M."/>
            <person name="Noone D."/>
            <person name="O'Reilly M."/>
            <person name="Ogawa K."/>
            <person name="Ogiwara A."/>
            <person name="Oudega B."/>
            <person name="Park S.-H."/>
            <person name="Parro V."/>
            <person name="Pohl T.M."/>
            <person name="Portetelle D."/>
            <person name="Porwollik S."/>
            <person name="Prescott A.M."/>
            <person name="Presecan E."/>
            <person name="Pujic P."/>
            <person name="Purnelle B."/>
            <person name="Rapoport G."/>
            <person name="Rey M."/>
            <person name="Reynolds S."/>
            <person name="Rieger M."/>
            <person name="Rivolta C."/>
            <person name="Rocha E."/>
            <person name="Roche B."/>
            <person name="Rose M."/>
            <person name="Sadaie Y."/>
            <person name="Sato T."/>
            <person name="Scanlan E."/>
            <person name="Schleich S."/>
            <person name="Schroeter R."/>
            <person name="Scoffone F."/>
            <person name="Sekiguchi J."/>
            <person name="Sekowska A."/>
            <person name="Seror S.J."/>
            <person name="Serror P."/>
            <person name="Shin B.-S."/>
            <person name="Soldo B."/>
            <person name="Sorokin A."/>
            <person name="Tacconi E."/>
            <person name="Takagi T."/>
            <person name="Takahashi H."/>
            <person name="Takemaru K."/>
            <person name="Takeuchi M."/>
            <person name="Tamakoshi A."/>
            <person name="Tanaka T."/>
            <person name="Terpstra P."/>
            <person name="Tognoni A."/>
            <person name="Tosato V."/>
            <person name="Uchiyama S."/>
            <person name="Vandenbol M."/>
            <person name="Vannier F."/>
            <person name="Vassarotti A."/>
            <person name="Viari A."/>
            <person name="Wambutt R."/>
            <person name="Wedler E."/>
            <person name="Wedler H."/>
            <person name="Weitzenegger T."/>
            <person name="Winters P."/>
            <person name="Wipat A."/>
            <person name="Yamamoto H."/>
            <person name="Yamane K."/>
            <person name="Yasumoto K."/>
            <person name="Yata K."/>
            <person name="Yoshida K."/>
            <person name="Yoshikawa H.-F."/>
            <person name="Zumstein E."/>
            <person name="Yoshikawa H."/>
            <person name="Danchin A."/>
        </authorList>
    </citation>
    <scope>NUCLEOTIDE SEQUENCE [LARGE SCALE GENOMIC DNA]</scope>
    <source>
        <strain>168</strain>
    </source>
</reference>
<reference key="3">
    <citation type="journal article" date="2003" name="J. Biol. Chem.">
        <title>Guanine nucleotides guanosine 5'-diphosphate 3'-diphosphate and GTP co-operatively regulate the production of an antibiotic bacilysin in Bacillus subtilis.</title>
        <authorList>
            <person name="Inaoka T."/>
            <person name="Takahashi K."/>
            <person name="Ohnishi-Kameyama M."/>
            <person name="Yoshida M."/>
            <person name="Ochi K."/>
        </authorList>
    </citation>
    <scope>REGULATION</scope>
    <source>
        <strain>168 / 61884</strain>
    </source>
</reference>
<reference key="4">
    <citation type="journal article" date="2005" name="Arch. Microbiol.">
        <title>bac genes for recombinant bacilysin and anticapsin production in Bacillus host strains.</title>
        <authorList>
            <person name="Steinborn G."/>
            <person name="Hajirezaei M.-R."/>
            <person name="Hofemeister J."/>
        </authorList>
    </citation>
    <scope>FUNCTION IN BACILYSIN PRODUCTION</scope>
    <scope>GENE NAME</scope>
</reference>
<accession>P39642</accession>
<comment type="function">
    <text evidence="2">Part of the bacilysin biosynthesis operon. May be involved in self-resistance to bacilysin by permitting efflux of this antibiotic.</text>
</comment>
<comment type="subcellular location">
    <subcellularLocation>
        <location evidence="3">Cell membrane</location>
        <topology evidence="3">Multi-pass membrane protein</topology>
    </subcellularLocation>
</comment>
<comment type="miscellaneous">
    <text>The compound ppGpp is essential for the transcription of the bacABCDE operon and GTP regulates the transcription of both this operon and ywfH via the CodY-mediated regulation system.</text>
</comment>
<comment type="similarity">
    <text evidence="3">Belongs to the major facilitator superfamily. Drug:H(+) antiporter-3 (DHA3) (TC 2.A.1.21) family.</text>
</comment>
<gene>
    <name type="primary">bacE</name>
    <name type="synonym">ywfF</name>
    <name type="ordered locus">BSU37700</name>
    <name type="ORF">ipa-84d</name>
</gene>
<name>BACE_BACSU</name>
<keyword id="KW-1003">Cell membrane</keyword>
<keyword id="KW-0472">Membrane</keyword>
<keyword id="KW-1185">Reference proteome</keyword>
<keyword id="KW-0812">Transmembrane</keyword>
<keyword id="KW-1133">Transmembrane helix</keyword>
<keyword id="KW-0813">Transport</keyword>
<protein>
    <recommendedName>
        <fullName>Putative bacilysin exporter BacE</fullName>
    </recommendedName>
</protein>
<sequence>MKQLKPNSKYLLYGQALSFMGDYCVLPALLILSTYYHDYWVTSGVIVVRSIPMVFQPFLGVLVDRLDRIKIMLWTDIIRGIIFLGLTFLPKGEYPLIFLALLFITYGSGVFFNPARLAVMSSLESDIKSINTLFAKATTISIIVGAAAGGLFLLGGSVELAVAFNGVTYLVSAFFISRIKLQFVPIQSENIKEAFQSFKEGLKEIKTNSFVLNAMFTMITMALLWGVVYSYFPIVSRFLGDGEIGNFILTFCIGFGGFIGAALVSKWGFNNNRGLTYFTVLSIVSLALFLFTPIFAVSVIAAILFFIAMEYGEVLAKVKVQENAANQIQGRIFSVAEASIGLCISIGSMFINILSAPVIMGLIVVIVCGLFLHTKLVNKSFLERDNKTEQKGVF</sequence>
<evidence type="ECO:0000255" key="1"/>
<evidence type="ECO:0000269" key="2">
    <source>
    </source>
</evidence>
<evidence type="ECO:0000305" key="3"/>